<protein>
    <recommendedName>
        <fullName>Tripartite motif-containing protein 2</fullName>
        <ecNumber>2.3.2.27</ecNumber>
    </recommendedName>
    <alternativeName>
        <fullName>E3 ubiquitin-protein ligase TRIM2</fullName>
    </alternativeName>
    <alternativeName>
        <fullName>Neural activity-related RING finger protein</fullName>
    </alternativeName>
    <alternativeName>
        <fullName evidence="10">RING-type E3 ubiquitin transferase TRIM2</fullName>
    </alternativeName>
</protein>
<accession>Q9ESN6</accession>
<accession>Q3UHP5</accession>
<accession>Q5DU27</accession>
<accession>Q8C981</accession>
<reference key="1">
    <citation type="journal article" date="2001" name="J. Neurochem.">
        <title>Molecular cloning and characterization of neural activity-related RING finger protein (NARF): a new member of the RBCC family is a candidate for the partner of myosin V.</title>
        <authorList>
            <person name="Ohkawa N."/>
            <person name="Kokura K."/>
            <person name="Matsu-ura T."/>
            <person name="Obinata T."/>
            <person name="Konishi Y."/>
            <person name="Tamura T.-A."/>
        </authorList>
    </citation>
    <scope>NUCLEOTIDE SEQUENCE [MRNA]</scope>
    <scope>SUBCELLULAR LOCATION</scope>
    <scope>TISSUE SPECIFICITY</scope>
    <source>
        <strain>ICR</strain>
        <tissue>Hippocampus</tissue>
    </source>
</reference>
<reference key="2">
    <citation type="journal article" date="2001" name="EMBO J.">
        <title>The tripartite motif family identifies cell compartments.</title>
        <authorList>
            <person name="Reymond A."/>
            <person name="Meroni G."/>
            <person name="Fantozzi A."/>
            <person name="Merla G."/>
            <person name="Cairo S."/>
            <person name="Luzi L."/>
            <person name="Riganelli D."/>
            <person name="Zanaria E."/>
            <person name="Messali S."/>
            <person name="Cainarca S."/>
            <person name="Guffanti A."/>
            <person name="Minucci S."/>
            <person name="Pelicci P.G."/>
            <person name="Ballabio A."/>
        </authorList>
    </citation>
    <scope>NUCLEOTIDE SEQUENCE [MRNA]</scope>
</reference>
<reference key="3">
    <citation type="journal article" date="2005" name="Science">
        <title>The transcriptional landscape of the mammalian genome.</title>
        <authorList>
            <person name="Carninci P."/>
            <person name="Kasukawa T."/>
            <person name="Katayama S."/>
            <person name="Gough J."/>
            <person name="Frith M.C."/>
            <person name="Maeda N."/>
            <person name="Oyama R."/>
            <person name="Ravasi T."/>
            <person name="Lenhard B."/>
            <person name="Wells C."/>
            <person name="Kodzius R."/>
            <person name="Shimokawa K."/>
            <person name="Bajic V.B."/>
            <person name="Brenner S.E."/>
            <person name="Batalov S."/>
            <person name="Forrest A.R."/>
            <person name="Zavolan M."/>
            <person name="Davis M.J."/>
            <person name="Wilming L.G."/>
            <person name="Aidinis V."/>
            <person name="Allen J.E."/>
            <person name="Ambesi-Impiombato A."/>
            <person name="Apweiler R."/>
            <person name="Aturaliya R.N."/>
            <person name="Bailey T.L."/>
            <person name="Bansal M."/>
            <person name="Baxter L."/>
            <person name="Beisel K.W."/>
            <person name="Bersano T."/>
            <person name="Bono H."/>
            <person name="Chalk A.M."/>
            <person name="Chiu K.P."/>
            <person name="Choudhary V."/>
            <person name="Christoffels A."/>
            <person name="Clutterbuck D.R."/>
            <person name="Crowe M.L."/>
            <person name="Dalla E."/>
            <person name="Dalrymple B.P."/>
            <person name="de Bono B."/>
            <person name="Della Gatta G."/>
            <person name="di Bernardo D."/>
            <person name="Down T."/>
            <person name="Engstrom P."/>
            <person name="Fagiolini M."/>
            <person name="Faulkner G."/>
            <person name="Fletcher C.F."/>
            <person name="Fukushima T."/>
            <person name="Furuno M."/>
            <person name="Futaki S."/>
            <person name="Gariboldi M."/>
            <person name="Georgii-Hemming P."/>
            <person name="Gingeras T.R."/>
            <person name="Gojobori T."/>
            <person name="Green R.E."/>
            <person name="Gustincich S."/>
            <person name="Harbers M."/>
            <person name="Hayashi Y."/>
            <person name="Hensch T.K."/>
            <person name="Hirokawa N."/>
            <person name="Hill D."/>
            <person name="Huminiecki L."/>
            <person name="Iacono M."/>
            <person name="Ikeo K."/>
            <person name="Iwama A."/>
            <person name="Ishikawa T."/>
            <person name="Jakt M."/>
            <person name="Kanapin A."/>
            <person name="Katoh M."/>
            <person name="Kawasawa Y."/>
            <person name="Kelso J."/>
            <person name="Kitamura H."/>
            <person name="Kitano H."/>
            <person name="Kollias G."/>
            <person name="Krishnan S.P."/>
            <person name="Kruger A."/>
            <person name="Kummerfeld S.K."/>
            <person name="Kurochkin I.V."/>
            <person name="Lareau L.F."/>
            <person name="Lazarevic D."/>
            <person name="Lipovich L."/>
            <person name="Liu J."/>
            <person name="Liuni S."/>
            <person name="McWilliam S."/>
            <person name="Madan Babu M."/>
            <person name="Madera M."/>
            <person name="Marchionni L."/>
            <person name="Matsuda H."/>
            <person name="Matsuzawa S."/>
            <person name="Miki H."/>
            <person name="Mignone F."/>
            <person name="Miyake S."/>
            <person name="Morris K."/>
            <person name="Mottagui-Tabar S."/>
            <person name="Mulder N."/>
            <person name="Nakano N."/>
            <person name="Nakauchi H."/>
            <person name="Ng P."/>
            <person name="Nilsson R."/>
            <person name="Nishiguchi S."/>
            <person name="Nishikawa S."/>
            <person name="Nori F."/>
            <person name="Ohara O."/>
            <person name="Okazaki Y."/>
            <person name="Orlando V."/>
            <person name="Pang K.C."/>
            <person name="Pavan W.J."/>
            <person name="Pavesi G."/>
            <person name="Pesole G."/>
            <person name="Petrovsky N."/>
            <person name="Piazza S."/>
            <person name="Reed J."/>
            <person name="Reid J.F."/>
            <person name="Ring B.Z."/>
            <person name="Ringwald M."/>
            <person name="Rost B."/>
            <person name="Ruan Y."/>
            <person name="Salzberg S.L."/>
            <person name="Sandelin A."/>
            <person name="Schneider C."/>
            <person name="Schoenbach C."/>
            <person name="Sekiguchi K."/>
            <person name="Semple C.A."/>
            <person name="Seno S."/>
            <person name="Sessa L."/>
            <person name="Sheng Y."/>
            <person name="Shibata Y."/>
            <person name="Shimada H."/>
            <person name="Shimada K."/>
            <person name="Silva D."/>
            <person name="Sinclair B."/>
            <person name="Sperling S."/>
            <person name="Stupka E."/>
            <person name="Sugiura K."/>
            <person name="Sultana R."/>
            <person name="Takenaka Y."/>
            <person name="Taki K."/>
            <person name="Tammoja K."/>
            <person name="Tan S.L."/>
            <person name="Tang S."/>
            <person name="Taylor M.S."/>
            <person name="Tegner J."/>
            <person name="Teichmann S.A."/>
            <person name="Ueda H.R."/>
            <person name="van Nimwegen E."/>
            <person name="Verardo R."/>
            <person name="Wei C.L."/>
            <person name="Yagi K."/>
            <person name="Yamanishi H."/>
            <person name="Zabarovsky E."/>
            <person name="Zhu S."/>
            <person name="Zimmer A."/>
            <person name="Hide W."/>
            <person name="Bult C."/>
            <person name="Grimmond S.M."/>
            <person name="Teasdale R.D."/>
            <person name="Liu E.T."/>
            <person name="Brusic V."/>
            <person name="Quackenbush J."/>
            <person name="Wahlestedt C."/>
            <person name="Mattick J.S."/>
            <person name="Hume D.A."/>
            <person name="Kai C."/>
            <person name="Sasaki D."/>
            <person name="Tomaru Y."/>
            <person name="Fukuda S."/>
            <person name="Kanamori-Katayama M."/>
            <person name="Suzuki M."/>
            <person name="Aoki J."/>
            <person name="Arakawa T."/>
            <person name="Iida J."/>
            <person name="Imamura K."/>
            <person name="Itoh M."/>
            <person name="Kato T."/>
            <person name="Kawaji H."/>
            <person name="Kawagashira N."/>
            <person name="Kawashima T."/>
            <person name="Kojima M."/>
            <person name="Kondo S."/>
            <person name="Konno H."/>
            <person name="Nakano K."/>
            <person name="Ninomiya N."/>
            <person name="Nishio T."/>
            <person name="Okada M."/>
            <person name="Plessy C."/>
            <person name="Shibata K."/>
            <person name="Shiraki T."/>
            <person name="Suzuki S."/>
            <person name="Tagami M."/>
            <person name="Waki K."/>
            <person name="Watahiki A."/>
            <person name="Okamura-Oho Y."/>
            <person name="Suzuki H."/>
            <person name="Kawai J."/>
            <person name="Hayashizaki Y."/>
        </authorList>
    </citation>
    <scope>NUCLEOTIDE SEQUENCE [LARGE SCALE MRNA]</scope>
    <source>
        <strain>C57BL/6J</strain>
        <tissue>Bone</tissue>
        <tissue>Cerebellum</tissue>
        <tissue>Corpora quadrigemina</tissue>
        <tissue>Spinal cord</tissue>
    </source>
</reference>
<reference key="4">
    <citation type="submission" date="2005-02" db="EMBL/GenBank/DDBJ databases">
        <title>Prediction of the coding sequences of mouse homologues of KIAA gene. The complete nucleotide sequences of mouse KIAA-homologous cDNAs identified by screening of terminal sequences of cDNA clones randomly sampled from size-fractionated libraries.</title>
        <authorList>
            <person name="Okazaki N."/>
            <person name="Kikuno R.F."/>
            <person name="Ohara R."/>
            <person name="Inamoto S."/>
            <person name="Nagase T."/>
            <person name="Ohara O."/>
            <person name="Koga H."/>
        </authorList>
    </citation>
    <scope>NUCLEOTIDE SEQUENCE [LARGE SCALE MRNA]</scope>
</reference>
<reference key="5">
    <citation type="journal article" date="2004" name="Genome Res.">
        <title>The status, quality, and expansion of the NIH full-length cDNA project: the Mammalian Gene Collection (MGC).</title>
        <authorList>
            <consortium name="The MGC Project Team"/>
        </authorList>
    </citation>
    <scope>NUCLEOTIDE SEQUENCE [LARGE SCALE MRNA]</scope>
    <source>
        <strain>C57BL/6J</strain>
        <tissue>Brain</tissue>
    </source>
</reference>
<reference key="6">
    <citation type="journal article" date="2008" name="Proc. Natl. Acad. Sci. U.S.A.">
        <title>Deficiency in ubiquitin ligase TRIM2 causes accumulation of neurofilament light chain and neurodegeneration.</title>
        <authorList>
            <person name="Balastik M."/>
            <person name="Ferraguti F."/>
            <person name="Pires-da Silva A."/>
            <person name="Lee T.H."/>
            <person name="Alvarez-Bolado G."/>
            <person name="Lu K.P."/>
            <person name="Gruss P."/>
        </authorList>
    </citation>
    <scope>FUNCTION</scope>
    <scope>INTERACTION WITH NEFL</scope>
    <scope>AUTOUBIQUITINATION</scope>
    <scope>DISRUPTION PHENOTYPE</scope>
    <scope>TISSUE SPECIFICITY</scope>
    <scope>DEVELOPMENTAL STAGE</scope>
</reference>
<reference key="7">
    <citation type="journal article" date="2010" name="Cell">
        <title>A tissue-specific atlas of mouse protein phosphorylation and expression.</title>
        <authorList>
            <person name="Huttlin E.L."/>
            <person name="Jedrychowski M.P."/>
            <person name="Elias J.E."/>
            <person name="Goswami T."/>
            <person name="Rad R."/>
            <person name="Beausoleil S.A."/>
            <person name="Villen J."/>
            <person name="Haas W."/>
            <person name="Sowa M.E."/>
            <person name="Gygi S.P."/>
        </authorList>
    </citation>
    <scope>PHOSPHORYLATION [LARGE SCALE ANALYSIS] AT THR-371; SER-375; SER-424 AND SER-428</scope>
    <scope>IDENTIFICATION BY MASS SPECTROMETRY [LARGE SCALE ANALYSIS]</scope>
    <source>
        <tissue>Brain</tissue>
        <tissue>Brown adipose tissue</tissue>
        <tissue>Kidney</tissue>
    </source>
</reference>
<reference key="8">
    <citation type="journal article" date="2011" name="J. Biol. Chem.">
        <title>Identification of a novel Bcl-2-interacting mediator of cell death (Bim) E3 ligase, tripartite motif-containing protein 2 (TRIM2), and its role in rapid ischemic tolerance-induced neuroprotection.</title>
        <authorList>
            <person name="Thompson S."/>
            <person name="Pearson A.N."/>
            <person name="Ashley M.D."/>
            <person name="Jessick V."/>
            <person name="Murphy B.M."/>
            <person name="Gafken P."/>
            <person name="Henshall D.C."/>
            <person name="Morris K.T."/>
            <person name="Simon R.P."/>
            <person name="Meller R."/>
        </authorList>
    </citation>
    <scope>FUNCTION</scope>
    <scope>INTERACTION WITH BCL2L11</scope>
</reference>
<reference key="9">
    <citation type="journal article" date="2019" name="PLoS Biol.">
        <title>TRIM2, a novel member of the antiviral family, limits New World arenavirus entry.</title>
        <authorList>
            <person name="Sarute N."/>
            <person name="Ibrahim N."/>
            <person name="Medegan Fagla B."/>
            <person name="Lavanya M."/>
            <person name="Cuevas C."/>
            <person name="Stavrou S."/>
            <person name="Otkiran-Clare G."/>
            <person name="Tyynismaa H."/>
            <person name="Henao-Mejia J."/>
            <person name="Ross S.R."/>
        </authorList>
    </citation>
    <scope>FUNCTION</scope>
    <scope>DISRUPTION PHENOTYPE</scope>
    <scope>INTERACTION WITH SIRPA</scope>
    <scope>SUBCELLULAR LOCATION</scope>
</reference>
<organism>
    <name type="scientific">Mus musculus</name>
    <name type="common">Mouse</name>
    <dbReference type="NCBI Taxonomy" id="10090"/>
    <lineage>
        <taxon>Eukaryota</taxon>
        <taxon>Metazoa</taxon>
        <taxon>Chordata</taxon>
        <taxon>Craniata</taxon>
        <taxon>Vertebrata</taxon>
        <taxon>Euteleostomi</taxon>
        <taxon>Mammalia</taxon>
        <taxon>Eutheria</taxon>
        <taxon>Euarchontoglires</taxon>
        <taxon>Glires</taxon>
        <taxon>Rodentia</taxon>
        <taxon>Myomorpha</taxon>
        <taxon>Muroidea</taxon>
        <taxon>Muridae</taxon>
        <taxon>Murinae</taxon>
        <taxon>Mus</taxon>
        <taxon>Mus</taxon>
    </lineage>
</organism>
<comment type="function">
    <text evidence="7 8 9">UBE2D1-dependent E3 ubiquitin-protein ligase that mediates the ubiquitination of NEFL and of phosphorylated BCL2L11. Plays a neuroprotective function. May play a role in neuronal rapid ischemic tolerance. Plays a role in antiviral immunity and limits new world arenavirus infection independently of its ubiquitin ligase activity by decreasing virus internalization (PubMed:30726215).</text>
</comment>
<comment type="catalytic activity">
    <reaction>
        <text>S-ubiquitinyl-[E2 ubiquitin-conjugating enzyme]-L-cysteine + [acceptor protein]-L-lysine = [E2 ubiquitin-conjugating enzyme]-L-cysteine + N(6)-ubiquitinyl-[acceptor protein]-L-lysine.</text>
        <dbReference type="EC" id="2.3.2.27"/>
    </reaction>
</comment>
<comment type="pathway">
    <text>Protein modification; protein ubiquitination.</text>
</comment>
<comment type="subunit">
    <text evidence="2 7 8 9">Forms homooligomers (By similarity). Interacts with TRIM3; this interaction reduces TRIM2 activity (By similarity). Interacts with myosin V; myosin V may not be a substrate for ubiquitination. Interacts with NEFL. Interacts with phosphorylated BCL2L11. Interacts with SIRPA (PubMed:30726215).</text>
</comment>
<comment type="interaction">
    <interactant intactId="EBI-8315064">
        <id>Q9ESN6</id>
    </interactant>
    <interactant intactId="EBI-445199">
        <id>P08551</id>
        <label>Nefl</label>
    </interactant>
    <organismsDiffer>false</organismsDiffer>
    <experiments>2</experiments>
</comment>
<comment type="subcellular location">
    <subcellularLocation>
        <location evidence="6 9">Cytoplasm</location>
    </subcellularLocation>
</comment>
<comment type="tissue specificity">
    <text evidence="6 7">Highly expressed in the cerebellum, hippocampus, retina and spinal cord. In the cerebellum, strongest expression in Purkinje cells and in the deep cerebellar nuclei. In retina, high expression in the ganglionic cell layer, inner nuclear layer and inthe outer plexiform layer. Particularly high expression in the hippocampus, in pyramidal cells of CA1-CA3 hippocampal areas and ingranule cells of the dentate gyrus.</text>
</comment>
<comment type="developmental stage">
    <text evidence="7">At 12.5 dpc, expressed in the developing nervous system, particularly in the spinal cord, dorsal rootganglia, hindbrain and midbrain.</text>
</comment>
<comment type="domain">
    <text>The interaction with myosin V is dependent upon its NHL repeats, which form a beta-propeller (NHL) domain containing six blades.</text>
</comment>
<comment type="PTM">
    <text evidence="7">RING-type zinc finger-dependent and UBE2D1-dependent autoubiquitination.</text>
</comment>
<comment type="disruption phenotype">
    <text evidence="7 9">Mutant mice are indistinguishable from wild type until about 1.5 months of age, when they begin to show intention tremor, followed by gait ataxia. At this stage, neurons exhibit axonal swellings, which consist of the accumulation of disorganized neurofilaments and microtubules, mitochondria and vesicles. In later stages, mutant animals suffer from episodes of spontaneous generalized seizures, a phenotype caused by progressive loss of Purkinje cells through apoptosis. At 4 months of age, retinas in mutant mice display decreased thickness of the inner nuclear layer and a reduced number of ganglionic cells. The outer plexiform layer is also reduced, whereas the size of the photoreceptor layer is not altered (PubMed:18687884). In addition, TRIM2-knockout mice are also more susceptible to infection with new world arenaviruses (PubMed:30726215).</text>
</comment>
<comment type="similarity">
    <text evidence="10">Belongs to the TRIM/RBCC family.</text>
</comment>
<comment type="sequence caution" evidence="10">
    <conflict type="erroneous initiation">
        <sequence resource="EMBL-CDS" id="BAD90242"/>
    </conflict>
    <text>Extended N-terminus.</text>
</comment>
<feature type="chain" id="PRO_0000056196" description="Tripartite motif-containing protein 2">
    <location>
        <begin position="1"/>
        <end position="744"/>
    </location>
</feature>
<feature type="repeat" description="Filamin">
    <location>
        <begin position="320"/>
        <end position="421"/>
    </location>
</feature>
<feature type="repeat" description="NHL 1">
    <location>
        <begin position="473"/>
        <end position="516"/>
    </location>
</feature>
<feature type="repeat" description="NHL 2">
    <location>
        <begin position="520"/>
        <end position="563"/>
    </location>
</feature>
<feature type="repeat" description="NHL 3">
    <location>
        <begin position="564"/>
        <end position="605"/>
    </location>
</feature>
<feature type="repeat" description="NHL 4">
    <location>
        <begin position="609"/>
        <end position="652"/>
    </location>
</feature>
<feature type="repeat" description="NHL 5">
    <location>
        <begin position="656"/>
        <end position="699"/>
    </location>
</feature>
<feature type="repeat" description="NHL 6">
    <location>
        <begin position="700"/>
        <end position="743"/>
    </location>
</feature>
<feature type="zinc finger region" description="RING-type" evidence="4">
    <location>
        <begin position="23"/>
        <end position="64"/>
    </location>
</feature>
<feature type="zinc finger region" description="B box-type" evidence="3">
    <location>
        <begin position="113"/>
        <end position="154"/>
    </location>
</feature>
<feature type="region of interest" description="Disordered" evidence="5">
    <location>
        <begin position="432"/>
        <end position="462"/>
    </location>
</feature>
<feature type="binding site" evidence="3">
    <location>
        <position position="118"/>
    </location>
    <ligand>
        <name>Zn(2+)</name>
        <dbReference type="ChEBI" id="CHEBI:29105"/>
    </ligand>
</feature>
<feature type="binding site" evidence="3">
    <location>
        <position position="121"/>
    </location>
    <ligand>
        <name>Zn(2+)</name>
        <dbReference type="ChEBI" id="CHEBI:29105"/>
    </ligand>
</feature>
<feature type="binding site" evidence="3">
    <location>
        <position position="141"/>
    </location>
    <ligand>
        <name>Zn(2+)</name>
        <dbReference type="ChEBI" id="CHEBI:29105"/>
    </ligand>
</feature>
<feature type="binding site" evidence="3">
    <location>
        <position position="146"/>
    </location>
    <ligand>
        <name>Zn(2+)</name>
        <dbReference type="ChEBI" id="CHEBI:29105"/>
    </ligand>
</feature>
<feature type="modified residue" description="Phosphoserine" evidence="1">
    <location>
        <position position="10"/>
    </location>
</feature>
<feature type="modified residue" description="Phosphothreonine" evidence="11">
    <location>
        <position position="371"/>
    </location>
</feature>
<feature type="modified residue" description="Phosphoserine" evidence="11">
    <location>
        <position position="375"/>
    </location>
</feature>
<feature type="modified residue" description="Phosphoserine" evidence="11">
    <location>
        <position position="424"/>
    </location>
</feature>
<feature type="modified residue" description="Phosphoserine" evidence="11">
    <location>
        <position position="428"/>
    </location>
</feature>
<dbReference type="EC" id="2.3.2.27"/>
<dbReference type="EMBL" id="AB043550">
    <property type="protein sequence ID" value="BAB17634.1"/>
    <property type="molecule type" value="mRNA"/>
</dbReference>
<dbReference type="EMBL" id="AF220017">
    <property type="protein sequence ID" value="AAG53471.1"/>
    <property type="molecule type" value="mRNA"/>
</dbReference>
<dbReference type="EMBL" id="AK042752">
    <property type="protein sequence ID" value="BAC31352.1"/>
    <property type="molecule type" value="mRNA"/>
</dbReference>
<dbReference type="EMBL" id="AK045410">
    <property type="protein sequence ID" value="BAC32350.1"/>
    <property type="molecule type" value="mRNA"/>
</dbReference>
<dbReference type="EMBL" id="AK079415">
    <property type="protein sequence ID" value="BAC37640.1"/>
    <property type="molecule type" value="mRNA"/>
</dbReference>
<dbReference type="EMBL" id="AK147275">
    <property type="protein sequence ID" value="BAE27812.1"/>
    <property type="molecule type" value="mRNA"/>
</dbReference>
<dbReference type="EMBL" id="AK220343">
    <property type="protein sequence ID" value="BAD90242.1"/>
    <property type="status" value="ALT_INIT"/>
    <property type="molecule type" value="mRNA"/>
</dbReference>
<dbReference type="EMBL" id="BC058961">
    <property type="protein sequence ID" value="AAH58961.1"/>
    <property type="molecule type" value="mRNA"/>
</dbReference>
<dbReference type="CCDS" id="CCDS71256.1"/>
<dbReference type="RefSeq" id="NP_001258654.1">
    <property type="nucleotide sequence ID" value="NM_001271725.1"/>
</dbReference>
<dbReference type="RefSeq" id="NP_001258655.1">
    <property type="nucleotide sequence ID" value="NM_001271726.1"/>
</dbReference>
<dbReference type="RefSeq" id="NP_001258656.1">
    <property type="nucleotide sequence ID" value="NM_001271727.1"/>
</dbReference>
<dbReference type="RefSeq" id="NP_001258657.1">
    <property type="nucleotide sequence ID" value="NM_001271728.1"/>
</dbReference>
<dbReference type="RefSeq" id="NP_109631.2">
    <property type="nucleotide sequence ID" value="NM_030706.3"/>
</dbReference>
<dbReference type="RefSeq" id="XP_017175303.1">
    <property type="nucleotide sequence ID" value="XM_017319814.3"/>
</dbReference>
<dbReference type="RefSeq" id="XP_030108779.1">
    <property type="nucleotide sequence ID" value="XM_030252919.2"/>
</dbReference>
<dbReference type="SMR" id="Q9ESN6"/>
<dbReference type="BioGRID" id="219833">
    <property type="interactions" value="12"/>
</dbReference>
<dbReference type="DIP" id="DIP-46254N"/>
<dbReference type="FunCoup" id="Q9ESN6">
    <property type="interactions" value="1468"/>
</dbReference>
<dbReference type="IntAct" id="Q9ESN6">
    <property type="interactions" value="1"/>
</dbReference>
<dbReference type="STRING" id="10090.ENSMUSP00000049902"/>
<dbReference type="GlyGen" id="Q9ESN6">
    <property type="glycosylation" value="1 site, 1 O-linked glycan (1 site)"/>
</dbReference>
<dbReference type="iPTMnet" id="Q9ESN6"/>
<dbReference type="PhosphoSitePlus" id="Q9ESN6"/>
<dbReference type="SwissPalm" id="Q9ESN6"/>
<dbReference type="PaxDb" id="10090-ENSMUSP00000069922"/>
<dbReference type="ProteomicsDB" id="258979"/>
<dbReference type="Pumba" id="Q9ESN6"/>
<dbReference type="DNASU" id="80890"/>
<dbReference type="Ensembl" id="ENSMUST00000065380.13">
    <property type="protein sequence ID" value="ENSMUSP00000069922.7"/>
    <property type="gene ID" value="ENSMUSG00000027993.17"/>
</dbReference>
<dbReference type="Ensembl" id="ENSMUST00000107691.8">
    <property type="protein sequence ID" value="ENSMUSP00000103319.2"/>
    <property type="gene ID" value="ENSMUSG00000027993.17"/>
</dbReference>
<dbReference type="Ensembl" id="ENSMUST00000107692.8">
    <property type="protein sequence ID" value="ENSMUSP00000103320.2"/>
    <property type="gene ID" value="ENSMUSG00000027993.17"/>
</dbReference>
<dbReference type="Ensembl" id="ENSMUST00000107693.9">
    <property type="protein sequence ID" value="ENSMUSP00000103321.3"/>
    <property type="gene ID" value="ENSMUSG00000027993.17"/>
</dbReference>
<dbReference type="GeneID" id="80890"/>
<dbReference type="KEGG" id="mmu:80890"/>
<dbReference type="UCSC" id="uc008ppx.3">
    <property type="organism name" value="mouse"/>
</dbReference>
<dbReference type="AGR" id="MGI:1933163"/>
<dbReference type="CTD" id="23321"/>
<dbReference type="MGI" id="MGI:1933163">
    <property type="gene designation" value="Trim2"/>
</dbReference>
<dbReference type="VEuPathDB" id="HostDB:ENSMUSG00000027993"/>
<dbReference type="eggNOG" id="KOG2177">
    <property type="taxonomic scope" value="Eukaryota"/>
</dbReference>
<dbReference type="GeneTree" id="ENSGT00940000155905"/>
<dbReference type="HOGENOM" id="CLU_008645_5_0_1"/>
<dbReference type="InParanoid" id="Q9ESN6"/>
<dbReference type="OrthoDB" id="342730at2759"/>
<dbReference type="PhylomeDB" id="Q9ESN6"/>
<dbReference type="TreeFam" id="TF331018"/>
<dbReference type="UniPathway" id="UPA00143"/>
<dbReference type="BioGRID-ORCS" id="80890">
    <property type="hits" value="4 hits in 75 CRISPR screens"/>
</dbReference>
<dbReference type="CD-CODE" id="764D0258">
    <property type="entry name" value="Neuronal RNP granule"/>
</dbReference>
<dbReference type="ChiTaRS" id="Trim2">
    <property type="organism name" value="mouse"/>
</dbReference>
<dbReference type="PRO" id="PR:Q9ESN6"/>
<dbReference type="Proteomes" id="UP000000589">
    <property type="component" value="Chromosome 3"/>
</dbReference>
<dbReference type="RNAct" id="Q9ESN6">
    <property type="molecule type" value="protein"/>
</dbReference>
<dbReference type="Bgee" id="ENSMUSG00000027993">
    <property type="expression patterns" value="Expressed in rostral migratory stream and 271 other cell types or tissues"/>
</dbReference>
<dbReference type="ExpressionAtlas" id="Q9ESN6">
    <property type="expression patterns" value="baseline and differential"/>
</dbReference>
<dbReference type="GO" id="GO:0005737">
    <property type="term" value="C:cytoplasm"/>
    <property type="evidence" value="ECO:0000303"/>
    <property type="project" value="UniProtKB"/>
</dbReference>
<dbReference type="GO" id="GO:0017022">
    <property type="term" value="F:myosin binding"/>
    <property type="evidence" value="ECO:0000303"/>
    <property type="project" value="UniProtKB"/>
</dbReference>
<dbReference type="GO" id="GO:0061630">
    <property type="term" value="F:ubiquitin protein ligase activity"/>
    <property type="evidence" value="ECO:0000314"/>
    <property type="project" value="MGI"/>
</dbReference>
<dbReference type="GO" id="GO:0004842">
    <property type="term" value="F:ubiquitin-protein transferase activity"/>
    <property type="evidence" value="ECO:0000314"/>
    <property type="project" value="UniProtKB"/>
</dbReference>
<dbReference type="GO" id="GO:0008270">
    <property type="term" value="F:zinc ion binding"/>
    <property type="evidence" value="ECO:0000303"/>
    <property type="project" value="UniProtKB"/>
</dbReference>
<dbReference type="GO" id="GO:1990830">
    <property type="term" value="P:cellular response to leukemia inhibitory factor"/>
    <property type="evidence" value="ECO:0000270"/>
    <property type="project" value="MGI"/>
</dbReference>
<dbReference type="GO" id="GO:0016567">
    <property type="term" value="P:protein ubiquitination"/>
    <property type="evidence" value="ECO:0007669"/>
    <property type="project" value="UniProtKB-UniPathway"/>
</dbReference>
<dbReference type="GO" id="GO:0043523">
    <property type="term" value="P:regulation of neuron apoptotic process"/>
    <property type="evidence" value="ECO:0000315"/>
    <property type="project" value="UniProtKB"/>
</dbReference>
<dbReference type="CDD" id="cd19824">
    <property type="entry name" value="Bbox2_TRIM2_C-VII"/>
    <property type="match status" value="1"/>
</dbReference>
<dbReference type="CDD" id="cd14960">
    <property type="entry name" value="NHL_TRIM2_like"/>
    <property type="match status" value="1"/>
</dbReference>
<dbReference type="CDD" id="cd16767">
    <property type="entry name" value="RING-HC_TRIM2"/>
    <property type="match status" value="1"/>
</dbReference>
<dbReference type="FunFam" id="2.120.10.30:FF:000007">
    <property type="entry name" value="Putative tripartite motif-containing protein 2"/>
    <property type="match status" value="1"/>
</dbReference>
<dbReference type="FunFam" id="2.120.10.30:FF:000004">
    <property type="entry name" value="Tripartite motif containing 2"/>
    <property type="match status" value="1"/>
</dbReference>
<dbReference type="FunFam" id="3.30.40.10:FF:000032">
    <property type="entry name" value="Tripartite motif containing 2"/>
    <property type="match status" value="1"/>
</dbReference>
<dbReference type="FunFam" id="2.60.40.10:FF:000198">
    <property type="entry name" value="Tripartite motif-containing protein 2"/>
    <property type="match status" value="1"/>
</dbReference>
<dbReference type="FunFam" id="3.30.160.60:FF:000154">
    <property type="entry name" value="Tripartite motif-containing protein 2"/>
    <property type="match status" value="1"/>
</dbReference>
<dbReference type="Gene3D" id="3.30.160.60">
    <property type="entry name" value="Classic Zinc Finger"/>
    <property type="match status" value="1"/>
</dbReference>
<dbReference type="Gene3D" id="2.60.40.10">
    <property type="entry name" value="Immunoglobulins"/>
    <property type="match status" value="1"/>
</dbReference>
<dbReference type="Gene3D" id="2.120.10.30">
    <property type="entry name" value="TolB, C-terminal domain"/>
    <property type="match status" value="2"/>
</dbReference>
<dbReference type="Gene3D" id="3.30.40.10">
    <property type="entry name" value="Zinc/RING finger domain, C3HC4 (zinc finger)"/>
    <property type="match status" value="1"/>
</dbReference>
<dbReference type="InterPro" id="IPR011042">
    <property type="entry name" value="6-blade_b-propeller_TolB-like"/>
</dbReference>
<dbReference type="InterPro" id="IPR003649">
    <property type="entry name" value="Bbox_C"/>
</dbReference>
<dbReference type="InterPro" id="IPR017868">
    <property type="entry name" value="Filamin/ABP280_repeat-like"/>
</dbReference>
<dbReference type="InterPro" id="IPR001298">
    <property type="entry name" value="Filamin/ABP280_rpt"/>
</dbReference>
<dbReference type="InterPro" id="IPR013783">
    <property type="entry name" value="Ig-like_fold"/>
</dbReference>
<dbReference type="InterPro" id="IPR014756">
    <property type="entry name" value="Ig_E-set"/>
</dbReference>
<dbReference type="InterPro" id="IPR001258">
    <property type="entry name" value="NHL_repeat"/>
</dbReference>
<dbReference type="InterPro" id="IPR050952">
    <property type="entry name" value="TRIM-NHL_E3_ligases"/>
</dbReference>
<dbReference type="InterPro" id="IPR027370">
    <property type="entry name" value="Znf-RING_euk"/>
</dbReference>
<dbReference type="InterPro" id="IPR000315">
    <property type="entry name" value="Znf_B-box"/>
</dbReference>
<dbReference type="InterPro" id="IPR001841">
    <property type="entry name" value="Znf_RING"/>
</dbReference>
<dbReference type="InterPro" id="IPR013083">
    <property type="entry name" value="Znf_RING/FYVE/PHD"/>
</dbReference>
<dbReference type="InterPro" id="IPR017907">
    <property type="entry name" value="Znf_RING_CS"/>
</dbReference>
<dbReference type="PANTHER" id="PTHR24104">
    <property type="entry name" value="E3 UBIQUITIN-PROTEIN LIGASE NHLRC1-RELATED"/>
    <property type="match status" value="1"/>
</dbReference>
<dbReference type="PANTHER" id="PTHR24104:SF58">
    <property type="entry name" value="TRIPARTITE MOTIF-CONTAINING PROTEIN 2"/>
    <property type="match status" value="1"/>
</dbReference>
<dbReference type="Pfam" id="PF00630">
    <property type="entry name" value="Filamin"/>
    <property type="match status" value="1"/>
</dbReference>
<dbReference type="Pfam" id="PF01436">
    <property type="entry name" value="NHL"/>
    <property type="match status" value="6"/>
</dbReference>
<dbReference type="Pfam" id="PF00643">
    <property type="entry name" value="zf-B_box"/>
    <property type="match status" value="1"/>
</dbReference>
<dbReference type="Pfam" id="PF13445">
    <property type="entry name" value="zf-RING_UBOX"/>
    <property type="match status" value="1"/>
</dbReference>
<dbReference type="SMART" id="SM00502">
    <property type="entry name" value="BBC"/>
    <property type="match status" value="1"/>
</dbReference>
<dbReference type="SMART" id="SM00336">
    <property type="entry name" value="BBOX"/>
    <property type="match status" value="1"/>
</dbReference>
<dbReference type="SMART" id="SM00557">
    <property type="entry name" value="IG_FLMN"/>
    <property type="match status" value="1"/>
</dbReference>
<dbReference type="SMART" id="SM00184">
    <property type="entry name" value="RING"/>
    <property type="match status" value="1"/>
</dbReference>
<dbReference type="SUPFAM" id="SSF57845">
    <property type="entry name" value="B-box zinc-binding domain"/>
    <property type="match status" value="1"/>
</dbReference>
<dbReference type="SUPFAM" id="SSF81296">
    <property type="entry name" value="E set domains"/>
    <property type="match status" value="1"/>
</dbReference>
<dbReference type="SUPFAM" id="SSF101898">
    <property type="entry name" value="NHL repeat"/>
    <property type="match status" value="1"/>
</dbReference>
<dbReference type="SUPFAM" id="SSF57850">
    <property type="entry name" value="RING/U-box"/>
    <property type="match status" value="1"/>
</dbReference>
<dbReference type="PROSITE" id="PS50194">
    <property type="entry name" value="FILAMIN_REPEAT"/>
    <property type="match status" value="1"/>
</dbReference>
<dbReference type="PROSITE" id="PS51125">
    <property type="entry name" value="NHL"/>
    <property type="match status" value="6"/>
</dbReference>
<dbReference type="PROSITE" id="PS50119">
    <property type="entry name" value="ZF_BBOX"/>
    <property type="match status" value="1"/>
</dbReference>
<dbReference type="PROSITE" id="PS00518">
    <property type="entry name" value="ZF_RING_1"/>
    <property type="match status" value="1"/>
</dbReference>
<dbReference type="PROSITE" id="PS50089">
    <property type="entry name" value="ZF_RING_2"/>
    <property type="match status" value="1"/>
</dbReference>
<proteinExistence type="evidence at protein level"/>
<keyword id="KW-0963">Cytoplasm</keyword>
<keyword id="KW-0479">Metal-binding</keyword>
<keyword id="KW-0597">Phosphoprotein</keyword>
<keyword id="KW-1185">Reference proteome</keyword>
<keyword id="KW-0677">Repeat</keyword>
<keyword id="KW-0808">Transferase</keyword>
<keyword id="KW-0832">Ubl conjugation</keyword>
<keyword id="KW-0833">Ubl conjugation pathway</keyword>
<keyword id="KW-0862">Zinc</keyword>
<keyword id="KW-0863">Zinc-finger</keyword>
<sequence length="744" mass="81445">MASEGASIPSPVVRQIDKQFLICSICLERYKNPKVLPCLHTFCERCLQNYIPAHSLTLSCPVCRQTSILPEKGVAALQNNFFITNLMDVLQRTPGSNGEDSSILETVTAVAAGKPLSCPNHDGNVMEFYCQSCETAMCRECTEGEHAEHPTVPLKDVVEQHKASLQVQLDAVNKRLPEIDSALQFISEIIHQLTNQKASIVDDIHSTFDELQKTLNVRKSVLLMELEVNYGLKHKVLQSQLDTLLQGQESIKSCSNFTAQALNHGTETEVLLVKKQMSEKLNELADQDFPLHPRENDQLDFIVETEGLKKSIHNLGTILTTNAVASETVATGEGLRQTIIGQPMSVTITTKDKDGELCKTGNAYLTAELSTPDGSVADGEILDNKNGTYEFLYTVQKEGDFTLSLRLYDQHIRGSPFKLKVIRSADVSPTTEGVKRRVKSPGSGHVKQKAVKRPASMYSTGKRKENPIEDDLIFRVGTKGRNKGEFTNLQGVAASTSGKILIADSNNQCVQIFSNDGQFKSRFGIRGRSPGQLQRPTGVAVHPSGDIIIADYDNKWVSIFSNDGKFKTKIGSGKLMGPKGVSVDRNGHIIVVDNKACCVFIFQPNGKIVTRFGSRGNGDRQFAGPHFAAVNSNNEIIITDFHNHSVKVFNQEGEFMLKFGSNGEGNGQFNAPTGVAVDSNGNIIVADWGNSRIQVFDGSGSFLSYINTSADPLYGPQGLALTSDGHVVVADSGNHCFKVYRYLQ</sequence>
<gene>
    <name type="primary">Trim2</name>
    <name type="synonym">Kiaa0517</name>
    <name type="synonym">Narf</name>
</gene>
<name>TRIM2_MOUSE</name>
<evidence type="ECO:0000250" key="1">
    <source>
        <dbReference type="UniProtKB" id="D3ZQG6"/>
    </source>
</evidence>
<evidence type="ECO:0000250" key="2">
    <source>
        <dbReference type="UniProtKB" id="Q9C040"/>
    </source>
</evidence>
<evidence type="ECO:0000255" key="3">
    <source>
        <dbReference type="PROSITE-ProRule" id="PRU00024"/>
    </source>
</evidence>
<evidence type="ECO:0000255" key="4">
    <source>
        <dbReference type="PROSITE-ProRule" id="PRU00175"/>
    </source>
</evidence>
<evidence type="ECO:0000256" key="5">
    <source>
        <dbReference type="SAM" id="MobiDB-lite"/>
    </source>
</evidence>
<evidence type="ECO:0000269" key="6">
    <source>
    </source>
</evidence>
<evidence type="ECO:0000269" key="7">
    <source>
    </source>
</evidence>
<evidence type="ECO:0000269" key="8">
    <source>
    </source>
</evidence>
<evidence type="ECO:0000269" key="9">
    <source>
    </source>
</evidence>
<evidence type="ECO:0000305" key="10"/>
<evidence type="ECO:0007744" key="11">
    <source>
    </source>
</evidence>